<protein>
    <recommendedName>
        <fullName evidence="1">tRNA-2-methylthio-N(6)-dimethylallyladenosine synthase</fullName>
        <ecNumber evidence="1">2.8.4.3</ecNumber>
    </recommendedName>
    <alternativeName>
        <fullName evidence="1">(Dimethylallyl)adenosine tRNA methylthiotransferase MiaB</fullName>
    </alternativeName>
    <alternativeName>
        <fullName evidence="1">tRNA-i(6)A37 methylthiotransferase</fullName>
    </alternativeName>
</protein>
<feature type="chain" id="PRO_0000374294" description="tRNA-2-methylthio-N(6)-dimethylallyladenosine synthase">
    <location>
        <begin position="1"/>
        <end position="474"/>
    </location>
</feature>
<feature type="domain" description="MTTase N-terminal" evidence="1">
    <location>
        <begin position="3"/>
        <end position="120"/>
    </location>
</feature>
<feature type="domain" description="Radical SAM core" evidence="2">
    <location>
        <begin position="143"/>
        <end position="375"/>
    </location>
</feature>
<feature type="domain" description="TRAM" evidence="1">
    <location>
        <begin position="378"/>
        <end position="441"/>
    </location>
</feature>
<feature type="binding site" evidence="1">
    <location>
        <position position="12"/>
    </location>
    <ligand>
        <name>[4Fe-4S] cluster</name>
        <dbReference type="ChEBI" id="CHEBI:49883"/>
        <label>1</label>
    </ligand>
</feature>
<feature type="binding site" evidence="1">
    <location>
        <position position="49"/>
    </location>
    <ligand>
        <name>[4Fe-4S] cluster</name>
        <dbReference type="ChEBI" id="CHEBI:49883"/>
        <label>1</label>
    </ligand>
</feature>
<feature type="binding site" evidence="1">
    <location>
        <position position="83"/>
    </location>
    <ligand>
        <name>[4Fe-4S] cluster</name>
        <dbReference type="ChEBI" id="CHEBI:49883"/>
        <label>1</label>
    </ligand>
</feature>
<feature type="binding site" evidence="1">
    <location>
        <position position="157"/>
    </location>
    <ligand>
        <name>[4Fe-4S] cluster</name>
        <dbReference type="ChEBI" id="CHEBI:49883"/>
        <label>2</label>
        <note>4Fe-4S-S-AdoMet</note>
    </ligand>
</feature>
<feature type="binding site" evidence="1">
    <location>
        <position position="161"/>
    </location>
    <ligand>
        <name>[4Fe-4S] cluster</name>
        <dbReference type="ChEBI" id="CHEBI:49883"/>
        <label>2</label>
        <note>4Fe-4S-S-AdoMet</note>
    </ligand>
</feature>
<feature type="binding site" evidence="1">
    <location>
        <position position="164"/>
    </location>
    <ligand>
        <name>[4Fe-4S] cluster</name>
        <dbReference type="ChEBI" id="CHEBI:49883"/>
        <label>2</label>
        <note>4Fe-4S-S-AdoMet</note>
    </ligand>
</feature>
<proteinExistence type="inferred from homology"/>
<accession>B7M5I8</accession>
<organism>
    <name type="scientific">Escherichia coli O8 (strain IAI1)</name>
    <dbReference type="NCBI Taxonomy" id="585034"/>
    <lineage>
        <taxon>Bacteria</taxon>
        <taxon>Pseudomonadati</taxon>
        <taxon>Pseudomonadota</taxon>
        <taxon>Gammaproteobacteria</taxon>
        <taxon>Enterobacterales</taxon>
        <taxon>Enterobacteriaceae</taxon>
        <taxon>Escherichia</taxon>
    </lineage>
</organism>
<evidence type="ECO:0000255" key="1">
    <source>
        <dbReference type="HAMAP-Rule" id="MF_01864"/>
    </source>
</evidence>
<evidence type="ECO:0000255" key="2">
    <source>
        <dbReference type="PROSITE-ProRule" id="PRU01266"/>
    </source>
</evidence>
<sequence>MTKKLHIKTWGCQMNEYDSSKMADLLDATHGYQLTDVAEEADVLLLNTCSIREKAQEKVFHQLGRWKLLKEKNPDLIIGVGGCVASQEGEHIRQRAHYVDIIFGPQTLHRLPEMINSVRGDRSPVVDISFPEIEKFDRLPEPRAEGPTAFVSIMEGCNKYCTYCVVPYTRGEEVSRPSDDILFEIAQLAAQGVREVNLLGQNVNAWRGENYDGTTGSFADLLRLVAAIDGIDRIRFTTSHPIEFTDDIIEVYRDTPELVSFLHLPVQSGSDRILNLMGRTHTALEYKAIIRKLRAARPDIQISSDFIVGFPGETTEDFEKTMKLIADVNFDMSYSFIFSARPGTPAADMVDDVPEEEKKQRLYILQERINQQAMAWSRRMLGTTQRILVEGTSRKSIMELSGRTENNRVVNFEGTPDMIGKFVDVEITDVYPNSLRGKVVRTEDEMGLRVAETPESVIARTRKENDLGVGYYQP</sequence>
<gene>
    <name evidence="1" type="primary">miaB</name>
    <name type="ordered locus">ECIAI1_0645</name>
</gene>
<dbReference type="EC" id="2.8.4.3" evidence="1"/>
<dbReference type="EMBL" id="CU928160">
    <property type="protein sequence ID" value="CAQ97515.1"/>
    <property type="molecule type" value="Genomic_DNA"/>
</dbReference>
<dbReference type="RefSeq" id="WP_000162740.1">
    <property type="nucleotide sequence ID" value="NC_011741.1"/>
</dbReference>
<dbReference type="SMR" id="B7M5I8"/>
<dbReference type="GeneID" id="86863171"/>
<dbReference type="KEGG" id="ecr:ECIAI1_0645"/>
<dbReference type="HOGENOM" id="CLU_018697_2_0_6"/>
<dbReference type="GO" id="GO:0005829">
    <property type="term" value="C:cytosol"/>
    <property type="evidence" value="ECO:0007669"/>
    <property type="project" value="TreeGrafter"/>
</dbReference>
<dbReference type="GO" id="GO:0051539">
    <property type="term" value="F:4 iron, 4 sulfur cluster binding"/>
    <property type="evidence" value="ECO:0007669"/>
    <property type="project" value="UniProtKB-UniRule"/>
</dbReference>
<dbReference type="GO" id="GO:0046872">
    <property type="term" value="F:metal ion binding"/>
    <property type="evidence" value="ECO:0007669"/>
    <property type="project" value="UniProtKB-KW"/>
</dbReference>
<dbReference type="GO" id="GO:0035597">
    <property type="term" value="F:N6-isopentenyladenosine methylthiotransferase activity"/>
    <property type="evidence" value="ECO:0007669"/>
    <property type="project" value="TreeGrafter"/>
</dbReference>
<dbReference type="CDD" id="cd01335">
    <property type="entry name" value="Radical_SAM"/>
    <property type="match status" value="1"/>
</dbReference>
<dbReference type="FunFam" id="3.40.50.12160:FF:000001">
    <property type="entry name" value="tRNA-2-methylthio-N(6)-dimethylallyladenosine synthase"/>
    <property type="match status" value="1"/>
</dbReference>
<dbReference type="FunFam" id="3.80.30.20:FF:000001">
    <property type="entry name" value="tRNA-2-methylthio-N(6)-dimethylallyladenosine synthase 2"/>
    <property type="match status" value="1"/>
</dbReference>
<dbReference type="Gene3D" id="3.40.50.12160">
    <property type="entry name" value="Methylthiotransferase, N-terminal domain"/>
    <property type="match status" value="1"/>
</dbReference>
<dbReference type="Gene3D" id="3.80.30.20">
    <property type="entry name" value="tm_1862 like domain"/>
    <property type="match status" value="1"/>
</dbReference>
<dbReference type="HAMAP" id="MF_01864">
    <property type="entry name" value="tRNA_metthiotr_MiaB"/>
    <property type="match status" value="1"/>
</dbReference>
<dbReference type="InterPro" id="IPR006638">
    <property type="entry name" value="Elp3/MiaA/NifB-like_rSAM"/>
</dbReference>
<dbReference type="InterPro" id="IPR005839">
    <property type="entry name" value="Methylthiotransferase"/>
</dbReference>
<dbReference type="InterPro" id="IPR020612">
    <property type="entry name" value="Methylthiotransferase_CS"/>
</dbReference>
<dbReference type="InterPro" id="IPR013848">
    <property type="entry name" value="Methylthiotransferase_N"/>
</dbReference>
<dbReference type="InterPro" id="IPR038135">
    <property type="entry name" value="Methylthiotransferase_N_sf"/>
</dbReference>
<dbReference type="InterPro" id="IPR006463">
    <property type="entry name" value="MiaB_methiolase"/>
</dbReference>
<dbReference type="InterPro" id="IPR007197">
    <property type="entry name" value="rSAM"/>
</dbReference>
<dbReference type="InterPro" id="IPR023404">
    <property type="entry name" value="rSAM_horseshoe"/>
</dbReference>
<dbReference type="InterPro" id="IPR002792">
    <property type="entry name" value="TRAM_dom"/>
</dbReference>
<dbReference type="NCBIfam" id="TIGR01574">
    <property type="entry name" value="miaB-methiolase"/>
    <property type="match status" value="1"/>
</dbReference>
<dbReference type="NCBIfam" id="TIGR00089">
    <property type="entry name" value="MiaB/RimO family radical SAM methylthiotransferase"/>
    <property type="match status" value="1"/>
</dbReference>
<dbReference type="PANTHER" id="PTHR43020">
    <property type="entry name" value="CDK5 REGULATORY SUBUNIT-ASSOCIATED PROTEIN 1"/>
    <property type="match status" value="1"/>
</dbReference>
<dbReference type="PANTHER" id="PTHR43020:SF2">
    <property type="entry name" value="MITOCHONDRIAL TRNA METHYLTHIOTRANSFERASE CDK5RAP1"/>
    <property type="match status" value="1"/>
</dbReference>
<dbReference type="Pfam" id="PF04055">
    <property type="entry name" value="Radical_SAM"/>
    <property type="match status" value="1"/>
</dbReference>
<dbReference type="Pfam" id="PF01938">
    <property type="entry name" value="TRAM"/>
    <property type="match status" value="1"/>
</dbReference>
<dbReference type="Pfam" id="PF00919">
    <property type="entry name" value="UPF0004"/>
    <property type="match status" value="1"/>
</dbReference>
<dbReference type="SFLD" id="SFLDF00273">
    <property type="entry name" value="(dimethylallyl)adenosine_tRNA"/>
    <property type="match status" value="1"/>
</dbReference>
<dbReference type="SFLD" id="SFLDG01082">
    <property type="entry name" value="B12-binding_domain_containing"/>
    <property type="match status" value="1"/>
</dbReference>
<dbReference type="SFLD" id="SFLDS00029">
    <property type="entry name" value="Radical_SAM"/>
    <property type="match status" value="1"/>
</dbReference>
<dbReference type="SMART" id="SM00729">
    <property type="entry name" value="Elp3"/>
    <property type="match status" value="1"/>
</dbReference>
<dbReference type="SUPFAM" id="SSF102114">
    <property type="entry name" value="Radical SAM enzymes"/>
    <property type="match status" value="1"/>
</dbReference>
<dbReference type="PROSITE" id="PS51449">
    <property type="entry name" value="MTTASE_N"/>
    <property type="match status" value="1"/>
</dbReference>
<dbReference type="PROSITE" id="PS01278">
    <property type="entry name" value="MTTASE_RADICAL"/>
    <property type="match status" value="1"/>
</dbReference>
<dbReference type="PROSITE" id="PS51918">
    <property type="entry name" value="RADICAL_SAM"/>
    <property type="match status" value="1"/>
</dbReference>
<dbReference type="PROSITE" id="PS50926">
    <property type="entry name" value="TRAM"/>
    <property type="match status" value="1"/>
</dbReference>
<comment type="function">
    <text evidence="1">Catalyzes the methylthiolation of N6-(dimethylallyl)adenosine (i(6)A), leading to the formation of 2-methylthio-N6-(dimethylallyl)adenosine (ms(2)i(6)A) at position 37 in tRNAs that read codons beginning with uridine.</text>
</comment>
<comment type="catalytic activity">
    <reaction evidence="1">
        <text>N(6)-dimethylallyladenosine(37) in tRNA + (sulfur carrier)-SH + AH2 + 2 S-adenosyl-L-methionine = 2-methylsulfanyl-N(6)-dimethylallyladenosine(37) in tRNA + (sulfur carrier)-H + 5'-deoxyadenosine + L-methionine + A + S-adenosyl-L-homocysteine + 2 H(+)</text>
        <dbReference type="Rhea" id="RHEA:37067"/>
        <dbReference type="Rhea" id="RHEA-COMP:10375"/>
        <dbReference type="Rhea" id="RHEA-COMP:10376"/>
        <dbReference type="Rhea" id="RHEA-COMP:14737"/>
        <dbReference type="Rhea" id="RHEA-COMP:14739"/>
        <dbReference type="ChEBI" id="CHEBI:13193"/>
        <dbReference type="ChEBI" id="CHEBI:15378"/>
        <dbReference type="ChEBI" id="CHEBI:17319"/>
        <dbReference type="ChEBI" id="CHEBI:17499"/>
        <dbReference type="ChEBI" id="CHEBI:29917"/>
        <dbReference type="ChEBI" id="CHEBI:57844"/>
        <dbReference type="ChEBI" id="CHEBI:57856"/>
        <dbReference type="ChEBI" id="CHEBI:59789"/>
        <dbReference type="ChEBI" id="CHEBI:64428"/>
        <dbReference type="ChEBI" id="CHEBI:74415"/>
        <dbReference type="ChEBI" id="CHEBI:74417"/>
        <dbReference type="EC" id="2.8.4.3"/>
    </reaction>
</comment>
<comment type="cofactor">
    <cofactor evidence="1">
        <name>[4Fe-4S] cluster</name>
        <dbReference type="ChEBI" id="CHEBI:49883"/>
    </cofactor>
    <text evidence="1">Binds 2 [4Fe-4S] clusters. One cluster is coordinated with 3 cysteines and an exchangeable S-adenosyl-L-methionine.</text>
</comment>
<comment type="subunit">
    <text evidence="1">Monomer.</text>
</comment>
<comment type="subcellular location">
    <subcellularLocation>
        <location evidence="1">Cytoplasm</location>
    </subcellularLocation>
</comment>
<comment type="similarity">
    <text evidence="1">Belongs to the methylthiotransferase family. MiaB subfamily.</text>
</comment>
<keyword id="KW-0004">4Fe-4S</keyword>
<keyword id="KW-0963">Cytoplasm</keyword>
<keyword id="KW-0408">Iron</keyword>
<keyword id="KW-0411">Iron-sulfur</keyword>
<keyword id="KW-0479">Metal-binding</keyword>
<keyword id="KW-0949">S-adenosyl-L-methionine</keyword>
<keyword id="KW-0808">Transferase</keyword>
<keyword id="KW-0819">tRNA processing</keyword>
<reference key="1">
    <citation type="journal article" date="2009" name="PLoS Genet.">
        <title>Organised genome dynamics in the Escherichia coli species results in highly diverse adaptive paths.</title>
        <authorList>
            <person name="Touchon M."/>
            <person name="Hoede C."/>
            <person name="Tenaillon O."/>
            <person name="Barbe V."/>
            <person name="Baeriswyl S."/>
            <person name="Bidet P."/>
            <person name="Bingen E."/>
            <person name="Bonacorsi S."/>
            <person name="Bouchier C."/>
            <person name="Bouvet O."/>
            <person name="Calteau A."/>
            <person name="Chiapello H."/>
            <person name="Clermont O."/>
            <person name="Cruveiller S."/>
            <person name="Danchin A."/>
            <person name="Diard M."/>
            <person name="Dossat C."/>
            <person name="Karoui M.E."/>
            <person name="Frapy E."/>
            <person name="Garry L."/>
            <person name="Ghigo J.M."/>
            <person name="Gilles A.M."/>
            <person name="Johnson J."/>
            <person name="Le Bouguenec C."/>
            <person name="Lescat M."/>
            <person name="Mangenot S."/>
            <person name="Martinez-Jehanne V."/>
            <person name="Matic I."/>
            <person name="Nassif X."/>
            <person name="Oztas S."/>
            <person name="Petit M.A."/>
            <person name="Pichon C."/>
            <person name="Rouy Z."/>
            <person name="Ruf C.S."/>
            <person name="Schneider D."/>
            <person name="Tourret J."/>
            <person name="Vacherie B."/>
            <person name="Vallenet D."/>
            <person name="Medigue C."/>
            <person name="Rocha E.P.C."/>
            <person name="Denamur E."/>
        </authorList>
    </citation>
    <scope>NUCLEOTIDE SEQUENCE [LARGE SCALE GENOMIC DNA]</scope>
    <source>
        <strain>IAI1</strain>
    </source>
</reference>
<name>MIAB_ECO8A</name>